<protein>
    <recommendedName>
        <fullName evidence="2">Elongation factor Tu</fullName>
        <shortName evidence="2">EF-Tu</shortName>
        <ecNumber evidence="2">3.6.5.3</ecNumber>
    </recommendedName>
</protein>
<gene>
    <name evidence="2" type="primary">tuf</name>
    <name type="ordered locus">Fjoh_1936</name>
</gene>
<reference key="1">
    <citation type="journal article" date="2009" name="Appl. Environ. Microbiol.">
        <title>Novel features of the polysaccharide-digesting gliding bacterium Flavobacterium johnsoniae as revealed by genome sequence analysis.</title>
        <authorList>
            <person name="McBride M.J."/>
            <person name="Xie G."/>
            <person name="Martens E.C."/>
            <person name="Lapidus A."/>
            <person name="Henrissat B."/>
            <person name="Rhodes R.G."/>
            <person name="Goltsman E."/>
            <person name="Wang W."/>
            <person name="Xu J."/>
            <person name="Hunnicutt D.W."/>
            <person name="Staroscik A.M."/>
            <person name="Hoover T.R."/>
            <person name="Cheng Y.Q."/>
            <person name="Stein J.L."/>
        </authorList>
    </citation>
    <scope>NUCLEOTIDE SEQUENCE [LARGE SCALE GENOMIC DNA]</scope>
    <source>
        <strain>ATCC 17061 / DSM 2064 / JCM 8514 / BCRC 14874 / CCUG 350202 / NBRC 14942 / NCIMB 11054 / UW101</strain>
    </source>
</reference>
<evidence type="ECO:0000250" key="1"/>
<evidence type="ECO:0000255" key="2">
    <source>
        <dbReference type="HAMAP-Rule" id="MF_00118"/>
    </source>
</evidence>
<dbReference type="EC" id="3.6.5.3" evidence="2"/>
<dbReference type="EMBL" id="CP000685">
    <property type="protein sequence ID" value="ABQ04968.1"/>
    <property type="molecule type" value="Genomic_DNA"/>
</dbReference>
<dbReference type="RefSeq" id="WP_012024011.1">
    <property type="nucleotide sequence ID" value="NZ_MUGZ01000012.1"/>
</dbReference>
<dbReference type="SMR" id="A5FIJ9"/>
<dbReference type="STRING" id="376686.Fjoh_1936"/>
<dbReference type="KEGG" id="fjo:Fjoh_1936"/>
<dbReference type="eggNOG" id="COG0050">
    <property type="taxonomic scope" value="Bacteria"/>
</dbReference>
<dbReference type="HOGENOM" id="CLU_007265_0_0_10"/>
<dbReference type="OrthoDB" id="9804504at2"/>
<dbReference type="Proteomes" id="UP000006694">
    <property type="component" value="Chromosome"/>
</dbReference>
<dbReference type="GO" id="GO:0005829">
    <property type="term" value="C:cytosol"/>
    <property type="evidence" value="ECO:0007669"/>
    <property type="project" value="TreeGrafter"/>
</dbReference>
<dbReference type="GO" id="GO:0005525">
    <property type="term" value="F:GTP binding"/>
    <property type="evidence" value="ECO:0007669"/>
    <property type="project" value="UniProtKB-UniRule"/>
</dbReference>
<dbReference type="GO" id="GO:0003924">
    <property type="term" value="F:GTPase activity"/>
    <property type="evidence" value="ECO:0007669"/>
    <property type="project" value="InterPro"/>
</dbReference>
<dbReference type="GO" id="GO:0003746">
    <property type="term" value="F:translation elongation factor activity"/>
    <property type="evidence" value="ECO:0007669"/>
    <property type="project" value="UniProtKB-UniRule"/>
</dbReference>
<dbReference type="CDD" id="cd01884">
    <property type="entry name" value="EF_Tu"/>
    <property type="match status" value="1"/>
</dbReference>
<dbReference type="CDD" id="cd03697">
    <property type="entry name" value="EFTU_II"/>
    <property type="match status" value="1"/>
</dbReference>
<dbReference type="CDD" id="cd03707">
    <property type="entry name" value="EFTU_III"/>
    <property type="match status" value="1"/>
</dbReference>
<dbReference type="FunFam" id="2.40.30.10:FF:000001">
    <property type="entry name" value="Elongation factor Tu"/>
    <property type="match status" value="1"/>
</dbReference>
<dbReference type="FunFam" id="3.40.50.300:FF:000003">
    <property type="entry name" value="Elongation factor Tu"/>
    <property type="match status" value="1"/>
</dbReference>
<dbReference type="Gene3D" id="3.40.50.300">
    <property type="entry name" value="P-loop containing nucleotide triphosphate hydrolases"/>
    <property type="match status" value="1"/>
</dbReference>
<dbReference type="Gene3D" id="2.40.30.10">
    <property type="entry name" value="Translation factors"/>
    <property type="match status" value="2"/>
</dbReference>
<dbReference type="HAMAP" id="MF_00118_B">
    <property type="entry name" value="EF_Tu_B"/>
    <property type="match status" value="1"/>
</dbReference>
<dbReference type="InterPro" id="IPR041709">
    <property type="entry name" value="EF-Tu_GTP-bd"/>
</dbReference>
<dbReference type="InterPro" id="IPR050055">
    <property type="entry name" value="EF-Tu_GTPase"/>
</dbReference>
<dbReference type="InterPro" id="IPR004161">
    <property type="entry name" value="EFTu-like_2"/>
</dbReference>
<dbReference type="InterPro" id="IPR033720">
    <property type="entry name" value="EFTU_2"/>
</dbReference>
<dbReference type="InterPro" id="IPR031157">
    <property type="entry name" value="G_TR_CS"/>
</dbReference>
<dbReference type="InterPro" id="IPR027417">
    <property type="entry name" value="P-loop_NTPase"/>
</dbReference>
<dbReference type="InterPro" id="IPR005225">
    <property type="entry name" value="Small_GTP-bd"/>
</dbReference>
<dbReference type="InterPro" id="IPR000795">
    <property type="entry name" value="T_Tr_GTP-bd_dom"/>
</dbReference>
<dbReference type="InterPro" id="IPR009000">
    <property type="entry name" value="Transl_B-barrel_sf"/>
</dbReference>
<dbReference type="InterPro" id="IPR009001">
    <property type="entry name" value="Transl_elong_EF1A/Init_IF2_C"/>
</dbReference>
<dbReference type="InterPro" id="IPR004541">
    <property type="entry name" value="Transl_elong_EFTu/EF1A_bac/org"/>
</dbReference>
<dbReference type="InterPro" id="IPR004160">
    <property type="entry name" value="Transl_elong_EFTu/EF1A_C"/>
</dbReference>
<dbReference type="NCBIfam" id="TIGR00485">
    <property type="entry name" value="EF-Tu"/>
    <property type="match status" value="1"/>
</dbReference>
<dbReference type="NCBIfam" id="NF000766">
    <property type="entry name" value="PRK00049.1"/>
    <property type="match status" value="1"/>
</dbReference>
<dbReference type="NCBIfam" id="NF009372">
    <property type="entry name" value="PRK12735.1"/>
    <property type="match status" value="1"/>
</dbReference>
<dbReference type="NCBIfam" id="NF009373">
    <property type="entry name" value="PRK12736.1"/>
    <property type="match status" value="1"/>
</dbReference>
<dbReference type="NCBIfam" id="TIGR00231">
    <property type="entry name" value="small_GTP"/>
    <property type="match status" value="1"/>
</dbReference>
<dbReference type="PANTHER" id="PTHR43721:SF22">
    <property type="entry name" value="ELONGATION FACTOR TU, MITOCHONDRIAL"/>
    <property type="match status" value="1"/>
</dbReference>
<dbReference type="PANTHER" id="PTHR43721">
    <property type="entry name" value="ELONGATION FACTOR TU-RELATED"/>
    <property type="match status" value="1"/>
</dbReference>
<dbReference type="Pfam" id="PF00009">
    <property type="entry name" value="GTP_EFTU"/>
    <property type="match status" value="1"/>
</dbReference>
<dbReference type="Pfam" id="PF03144">
    <property type="entry name" value="GTP_EFTU_D2"/>
    <property type="match status" value="1"/>
</dbReference>
<dbReference type="Pfam" id="PF03143">
    <property type="entry name" value="GTP_EFTU_D3"/>
    <property type="match status" value="1"/>
</dbReference>
<dbReference type="PRINTS" id="PR00315">
    <property type="entry name" value="ELONGATNFCT"/>
</dbReference>
<dbReference type="SUPFAM" id="SSF50465">
    <property type="entry name" value="EF-Tu/eEF-1alpha/eIF2-gamma C-terminal domain"/>
    <property type="match status" value="1"/>
</dbReference>
<dbReference type="SUPFAM" id="SSF52540">
    <property type="entry name" value="P-loop containing nucleoside triphosphate hydrolases"/>
    <property type="match status" value="1"/>
</dbReference>
<dbReference type="SUPFAM" id="SSF50447">
    <property type="entry name" value="Translation proteins"/>
    <property type="match status" value="1"/>
</dbReference>
<dbReference type="PROSITE" id="PS00301">
    <property type="entry name" value="G_TR_1"/>
    <property type="match status" value="1"/>
</dbReference>
<dbReference type="PROSITE" id="PS51722">
    <property type="entry name" value="G_TR_2"/>
    <property type="match status" value="1"/>
</dbReference>
<name>EFTU_FLAJ1</name>
<keyword id="KW-0963">Cytoplasm</keyword>
<keyword id="KW-0251">Elongation factor</keyword>
<keyword id="KW-0342">GTP-binding</keyword>
<keyword id="KW-0378">Hydrolase</keyword>
<keyword id="KW-0460">Magnesium</keyword>
<keyword id="KW-0479">Metal-binding</keyword>
<keyword id="KW-0547">Nucleotide-binding</keyword>
<keyword id="KW-0648">Protein biosynthesis</keyword>
<proteinExistence type="inferred from homology"/>
<comment type="function">
    <text evidence="2">GTP hydrolase that promotes the GTP-dependent binding of aminoacyl-tRNA to the A-site of ribosomes during protein biosynthesis.</text>
</comment>
<comment type="catalytic activity">
    <reaction evidence="2">
        <text>GTP + H2O = GDP + phosphate + H(+)</text>
        <dbReference type="Rhea" id="RHEA:19669"/>
        <dbReference type="ChEBI" id="CHEBI:15377"/>
        <dbReference type="ChEBI" id="CHEBI:15378"/>
        <dbReference type="ChEBI" id="CHEBI:37565"/>
        <dbReference type="ChEBI" id="CHEBI:43474"/>
        <dbReference type="ChEBI" id="CHEBI:58189"/>
        <dbReference type="EC" id="3.6.5.3"/>
    </reaction>
    <physiologicalReaction direction="left-to-right" evidence="2">
        <dbReference type="Rhea" id="RHEA:19670"/>
    </physiologicalReaction>
</comment>
<comment type="subunit">
    <text evidence="2">Monomer.</text>
</comment>
<comment type="subcellular location">
    <subcellularLocation>
        <location evidence="2">Cytoplasm</location>
    </subcellularLocation>
</comment>
<comment type="similarity">
    <text evidence="2">Belongs to the TRAFAC class translation factor GTPase superfamily. Classic translation factor GTPase family. EF-Tu/EF-1A subfamily.</text>
</comment>
<organism>
    <name type="scientific">Flavobacterium johnsoniae (strain ATCC 17061 / DSM 2064 / JCM 8514 / BCRC 14874 / CCUG 350202 / NBRC 14942 / NCIMB 11054 / UW101)</name>
    <name type="common">Cytophaga johnsonae</name>
    <dbReference type="NCBI Taxonomy" id="376686"/>
    <lineage>
        <taxon>Bacteria</taxon>
        <taxon>Pseudomonadati</taxon>
        <taxon>Bacteroidota</taxon>
        <taxon>Flavobacteriia</taxon>
        <taxon>Flavobacteriales</taxon>
        <taxon>Flavobacteriaceae</taxon>
        <taxon>Flavobacterium</taxon>
    </lineage>
</organism>
<sequence>MAKENFNRSKPHLNIGTIGHVDHGKTTLTAAITKVLSDAGYCQAKSFDQIDNAPEEKERGITINTSHVEYETANRHYAHVDCPGHADYVKNMVTGAAQMDGAILVVAATDGPMPQTREHILLGRQVGIPRIVVFMNKVDMVDDAELLELVEMEIRDLLSFYEYDGDNGPVVQGSALGGLNNDPNWVPKIIELMEAVDNWIEEPVRDVAKPFLMPVEDVFTITGRGTVATGRIETGVANTGDPVEIIGMGAEKLTSTITGVEMFRKILDRGEAGDNVGLLLRGIDKADIKRGMVIIKPGSVKPHAKFKAEVYILKKEEGGRHTPFHNNYRPQFYVRTTDVTGVISLPAGVEMVMPGDNLTIEVALLSPIAMNVGLRFAIREGGRTVGAGQVTEIVE</sequence>
<accession>A5FIJ9</accession>
<feature type="chain" id="PRO_1000076097" description="Elongation factor Tu">
    <location>
        <begin position="1"/>
        <end position="395"/>
    </location>
</feature>
<feature type="domain" description="tr-type G">
    <location>
        <begin position="10"/>
        <end position="204"/>
    </location>
</feature>
<feature type="region of interest" description="G1" evidence="1">
    <location>
        <begin position="19"/>
        <end position="26"/>
    </location>
</feature>
<feature type="region of interest" description="G2" evidence="1">
    <location>
        <begin position="60"/>
        <end position="64"/>
    </location>
</feature>
<feature type="region of interest" description="G3" evidence="1">
    <location>
        <begin position="81"/>
        <end position="84"/>
    </location>
</feature>
<feature type="region of interest" description="G4" evidence="1">
    <location>
        <begin position="136"/>
        <end position="139"/>
    </location>
</feature>
<feature type="region of interest" description="G5" evidence="1">
    <location>
        <begin position="174"/>
        <end position="176"/>
    </location>
</feature>
<feature type="binding site" evidence="2">
    <location>
        <begin position="19"/>
        <end position="26"/>
    </location>
    <ligand>
        <name>GTP</name>
        <dbReference type="ChEBI" id="CHEBI:37565"/>
    </ligand>
</feature>
<feature type="binding site" evidence="2">
    <location>
        <position position="26"/>
    </location>
    <ligand>
        <name>Mg(2+)</name>
        <dbReference type="ChEBI" id="CHEBI:18420"/>
    </ligand>
</feature>
<feature type="binding site" evidence="2">
    <location>
        <begin position="81"/>
        <end position="85"/>
    </location>
    <ligand>
        <name>GTP</name>
        <dbReference type="ChEBI" id="CHEBI:37565"/>
    </ligand>
</feature>
<feature type="binding site" evidence="2">
    <location>
        <begin position="136"/>
        <end position="139"/>
    </location>
    <ligand>
        <name>GTP</name>
        <dbReference type="ChEBI" id="CHEBI:37565"/>
    </ligand>
</feature>